<protein>
    <recommendedName>
        <fullName>Inorganic pyrophosphatase</fullName>
        <ecNumber>3.6.1.1</ecNumber>
    </recommendedName>
    <alternativeName>
        <fullName>Pyrophosphate phospho-hydrolase</fullName>
        <shortName>PPase</shortName>
    </alternativeName>
</protein>
<evidence type="ECO:0000250" key="1"/>
<evidence type="ECO:0000250" key="2">
    <source>
        <dbReference type="UniProtKB" id="Q15181"/>
    </source>
</evidence>
<evidence type="ECO:0000305" key="3"/>
<proteinExistence type="evidence at protein level"/>
<name>IPYR_MOUSE</name>
<keyword id="KW-0007">Acetylation</keyword>
<keyword id="KW-0963">Cytoplasm</keyword>
<keyword id="KW-0903">Direct protein sequencing</keyword>
<keyword id="KW-0378">Hydrolase</keyword>
<keyword id="KW-0460">Magnesium</keyword>
<keyword id="KW-0479">Metal-binding</keyword>
<keyword id="KW-0597">Phosphoprotein</keyword>
<keyword id="KW-1185">Reference proteome</keyword>
<accession>Q9D819</accession>
<organism>
    <name type="scientific">Mus musculus</name>
    <name type="common">Mouse</name>
    <dbReference type="NCBI Taxonomy" id="10090"/>
    <lineage>
        <taxon>Eukaryota</taxon>
        <taxon>Metazoa</taxon>
        <taxon>Chordata</taxon>
        <taxon>Craniata</taxon>
        <taxon>Vertebrata</taxon>
        <taxon>Euteleostomi</taxon>
        <taxon>Mammalia</taxon>
        <taxon>Eutheria</taxon>
        <taxon>Euarchontoglires</taxon>
        <taxon>Glires</taxon>
        <taxon>Rodentia</taxon>
        <taxon>Myomorpha</taxon>
        <taxon>Muroidea</taxon>
        <taxon>Muridae</taxon>
        <taxon>Murinae</taxon>
        <taxon>Mus</taxon>
        <taxon>Mus</taxon>
    </lineage>
</organism>
<comment type="catalytic activity">
    <reaction>
        <text>diphosphate + H2O = 2 phosphate + H(+)</text>
        <dbReference type="Rhea" id="RHEA:24576"/>
        <dbReference type="ChEBI" id="CHEBI:15377"/>
        <dbReference type="ChEBI" id="CHEBI:15378"/>
        <dbReference type="ChEBI" id="CHEBI:33019"/>
        <dbReference type="ChEBI" id="CHEBI:43474"/>
        <dbReference type="EC" id="3.6.1.1"/>
    </reaction>
</comment>
<comment type="cofactor">
    <cofactor evidence="1">
        <name>Mg(2+)</name>
        <dbReference type="ChEBI" id="CHEBI:18420"/>
    </cofactor>
</comment>
<comment type="subunit">
    <text evidence="1">Homodimer.</text>
</comment>
<comment type="subcellular location">
    <subcellularLocation>
        <location evidence="1">Cytoplasm</location>
    </subcellularLocation>
</comment>
<comment type="similarity">
    <text evidence="3">Belongs to the PPase family.</text>
</comment>
<reference key="1">
    <citation type="journal article" date="2005" name="Science">
        <title>The transcriptional landscape of the mammalian genome.</title>
        <authorList>
            <person name="Carninci P."/>
            <person name="Kasukawa T."/>
            <person name="Katayama S."/>
            <person name="Gough J."/>
            <person name="Frith M.C."/>
            <person name="Maeda N."/>
            <person name="Oyama R."/>
            <person name="Ravasi T."/>
            <person name="Lenhard B."/>
            <person name="Wells C."/>
            <person name="Kodzius R."/>
            <person name="Shimokawa K."/>
            <person name="Bajic V.B."/>
            <person name="Brenner S.E."/>
            <person name="Batalov S."/>
            <person name="Forrest A.R."/>
            <person name="Zavolan M."/>
            <person name="Davis M.J."/>
            <person name="Wilming L.G."/>
            <person name="Aidinis V."/>
            <person name="Allen J.E."/>
            <person name="Ambesi-Impiombato A."/>
            <person name="Apweiler R."/>
            <person name="Aturaliya R.N."/>
            <person name="Bailey T.L."/>
            <person name="Bansal M."/>
            <person name="Baxter L."/>
            <person name="Beisel K.W."/>
            <person name="Bersano T."/>
            <person name="Bono H."/>
            <person name="Chalk A.M."/>
            <person name="Chiu K.P."/>
            <person name="Choudhary V."/>
            <person name="Christoffels A."/>
            <person name="Clutterbuck D.R."/>
            <person name="Crowe M.L."/>
            <person name="Dalla E."/>
            <person name="Dalrymple B.P."/>
            <person name="de Bono B."/>
            <person name="Della Gatta G."/>
            <person name="di Bernardo D."/>
            <person name="Down T."/>
            <person name="Engstrom P."/>
            <person name="Fagiolini M."/>
            <person name="Faulkner G."/>
            <person name="Fletcher C.F."/>
            <person name="Fukushima T."/>
            <person name="Furuno M."/>
            <person name="Futaki S."/>
            <person name="Gariboldi M."/>
            <person name="Georgii-Hemming P."/>
            <person name="Gingeras T.R."/>
            <person name="Gojobori T."/>
            <person name="Green R.E."/>
            <person name="Gustincich S."/>
            <person name="Harbers M."/>
            <person name="Hayashi Y."/>
            <person name="Hensch T.K."/>
            <person name="Hirokawa N."/>
            <person name="Hill D."/>
            <person name="Huminiecki L."/>
            <person name="Iacono M."/>
            <person name="Ikeo K."/>
            <person name="Iwama A."/>
            <person name="Ishikawa T."/>
            <person name="Jakt M."/>
            <person name="Kanapin A."/>
            <person name="Katoh M."/>
            <person name="Kawasawa Y."/>
            <person name="Kelso J."/>
            <person name="Kitamura H."/>
            <person name="Kitano H."/>
            <person name="Kollias G."/>
            <person name="Krishnan S.P."/>
            <person name="Kruger A."/>
            <person name="Kummerfeld S.K."/>
            <person name="Kurochkin I.V."/>
            <person name="Lareau L.F."/>
            <person name="Lazarevic D."/>
            <person name="Lipovich L."/>
            <person name="Liu J."/>
            <person name="Liuni S."/>
            <person name="McWilliam S."/>
            <person name="Madan Babu M."/>
            <person name="Madera M."/>
            <person name="Marchionni L."/>
            <person name="Matsuda H."/>
            <person name="Matsuzawa S."/>
            <person name="Miki H."/>
            <person name="Mignone F."/>
            <person name="Miyake S."/>
            <person name="Morris K."/>
            <person name="Mottagui-Tabar S."/>
            <person name="Mulder N."/>
            <person name="Nakano N."/>
            <person name="Nakauchi H."/>
            <person name="Ng P."/>
            <person name="Nilsson R."/>
            <person name="Nishiguchi S."/>
            <person name="Nishikawa S."/>
            <person name="Nori F."/>
            <person name="Ohara O."/>
            <person name="Okazaki Y."/>
            <person name="Orlando V."/>
            <person name="Pang K.C."/>
            <person name="Pavan W.J."/>
            <person name="Pavesi G."/>
            <person name="Pesole G."/>
            <person name="Petrovsky N."/>
            <person name="Piazza S."/>
            <person name="Reed J."/>
            <person name="Reid J.F."/>
            <person name="Ring B.Z."/>
            <person name="Ringwald M."/>
            <person name="Rost B."/>
            <person name="Ruan Y."/>
            <person name="Salzberg S.L."/>
            <person name="Sandelin A."/>
            <person name="Schneider C."/>
            <person name="Schoenbach C."/>
            <person name="Sekiguchi K."/>
            <person name="Semple C.A."/>
            <person name="Seno S."/>
            <person name="Sessa L."/>
            <person name="Sheng Y."/>
            <person name="Shibata Y."/>
            <person name="Shimada H."/>
            <person name="Shimada K."/>
            <person name="Silva D."/>
            <person name="Sinclair B."/>
            <person name="Sperling S."/>
            <person name="Stupka E."/>
            <person name="Sugiura K."/>
            <person name="Sultana R."/>
            <person name="Takenaka Y."/>
            <person name="Taki K."/>
            <person name="Tammoja K."/>
            <person name="Tan S.L."/>
            <person name="Tang S."/>
            <person name="Taylor M.S."/>
            <person name="Tegner J."/>
            <person name="Teichmann S.A."/>
            <person name="Ueda H.R."/>
            <person name="van Nimwegen E."/>
            <person name="Verardo R."/>
            <person name="Wei C.L."/>
            <person name="Yagi K."/>
            <person name="Yamanishi H."/>
            <person name="Zabarovsky E."/>
            <person name="Zhu S."/>
            <person name="Zimmer A."/>
            <person name="Hide W."/>
            <person name="Bult C."/>
            <person name="Grimmond S.M."/>
            <person name="Teasdale R.D."/>
            <person name="Liu E.T."/>
            <person name="Brusic V."/>
            <person name="Quackenbush J."/>
            <person name="Wahlestedt C."/>
            <person name="Mattick J.S."/>
            <person name="Hume D.A."/>
            <person name="Kai C."/>
            <person name="Sasaki D."/>
            <person name="Tomaru Y."/>
            <person name="Fukuda S."/>
            <person name="Kanamori-Katayama M."/>
            <person name="Suzuki M."/>
            <person name="Aoki J."/>
            <person name="Arakawa T."/>
            <person name="Iida J."/>
            <person name="Imamura K."/>
            <person name="Itoh M."/>
            <person name="Kato T."/>
            <person name="Kawaji H."/>
            <person name="Kawagashira N."/>
            <person name="Kawashima T."/>
            <person name="Kojima M."/>
            <person name="Kondo S."/>
            <person name="Konno H."/>
            <person name="Nakano K."/>
            <person name="Ninomiya N."/>
            <person name="Nishio T."/>
            <person name="Okada M."/>
            <person name="Plessy C."/>
            <person name="Shibata K."/>
            <person name="Shiraki T."/>
            <person name="Suzuki S."/>
            <person name="Tagami M."/>
            <person name="Waki K."/>
            <person name="Watahiki A."/>
            <person name="Okamura-Oho Y."/>
            <person name="Suzuki H."/>
            <person name="Kawai J."/>
            <person name="Hayashizaki Y."/>
        </authorList>
    </citation>
    <scope>NUCLEOTIDE SEQUENCE [LARGE SCALE MRNA]</scope>
    <source>
        <strain>C57BL/6J</strain>
        <tissue>Small intestine</tissue>
    </source>
</reference>
<reference key="2">
    <citation type="journal article" date="2004" name="Genome Res.">
        <title>The status, quality, and expansion of the NIH full-length cDNA project: the Mammalian Gene Collection (MGC).</title>
        <authorList>
            <consortium name="The MGC Project Team"/>
        </authorList>
    </citation>
    <scope>NUCLEOTIDE SEQUENCE [LARGE SCALE MRNA]</scope>
    <source>
        <strain>FVB/N</strain>
        <tissue>Mammary tumor</tissue>
    </source>
</reference>
<reference key="3">
    <citation type="submission" date="2007-03" db="UniProtKB">
        <authorList>
            <person name="Lubec G."/>
            <person name="Klug S."/>
        </authorList>
    </citation>
    <scope>PROTEIN SEQUENCE OF 26-41</scope>
    <scope>IDENTIFICATION BY MASS SPECTROMETRY</scope>
    <source>
        <tissue>Hippocampus</tissue>
    </source>
</reference>
<reference key="4">
    <citation type="journal article" date="2010" name="Cell">
        <title>A tissue-specific atlas of mouse protein phosphorylation and expression.</title>
        <authorList>
            <person name="Huttlin E.L."/>
            <person name="Jedrychowski M.P."/>
            <person name="Elias J.E."/>
            <person name="Goswami T."/>
            <person name="Rad R."/>
            <person name="Beausoleil S.A."/>
            <person name="Villen J."/>
            <person name="Haas W."/>
            <person name="Sowa M.E."/>
            <person name="Gygi S.P."/>
        </authorList>
    </citation>
    <scope>IDENTIFICATION BY MASS SPECTROMETRY [LARGE SCALE ANALYSIS]</scope>
    <source>
        <tissue>Brain</tissue>
        <tissue>Brown adipose tissue</tissue>
        <tissue>Heart</tissue>
        <tissue>Kidney</tissue>
        <tissue>Liver</tissue>
        <tissue>Lung</tissue>
        <tissue>Pancreas</tissue>
        <tissue>Spleen</tissue>
        <tissue>Testis</tissue>
    </source>
</reference>
<dbReference type="EC" id="3.6.1.1"/>
<dbReference type="EMBL" id="AK008575">
    <property type="protein sequence ID" value="BAB25754.1"/>
    <property type="molecule type" value="mRNA"/>
</dbReference>
<dbReference type="EMBL" id="BC010468">
    <property type="protein sequence ID" value="AAH10468.1"/>
    <property type="molecule type" value="mRNA"/>
</dbReference>
<dbReference type="CCDS" id="CCDS23882.1"/>
<dbReference type="RefSeq" id="NP_080714.2">
    <property type="nucleotide sequence ID" value="NM_026438.4"/>
</dbReference>
<dbReference type="SMR" id="Q9D819"/>
<dbReference type="BioGRID" id="212519">
    <property type="interactions" value="12"/>
</dbReference>
<dbReference type="FunCoup" id="Q9D819">
    <property type="interactions" value="1769"/>
</dbReference>
<dbReference type="IntAct" id="Q9D819">
    <property type="interactions" value="4"/>
</dbReference>
<dbReference type="MINT" id="Q9D819"/>
<dbReference type="STRING" id="10090.ENSMUSP00000020286"/>
<dbReference type="GlyGen" id="Q9D819">
    <property type="glycosylation" value="1 site, 1 O-linked glycan (1 site)"/>
</dbReference>
<dbReference type="iPTMnet" id="Q9D819"/>
<dbReference type="PhosphoSitePlus" id="Q9D819"/>
<dbReference type="SwissPalm" id="Q9D819"/>
<dbReference type="REPRODUCTION-2DPAGE" id="IPI00110684"/>
<dbReference type="REPRODUCTION-2DPAGE" id="Q9D819"/>
<dbReference type="CPTAC" id="non-CPTAC-3340"/>
<dbReference type="CPTAC" id="non-CPTAC-3923"/>
<dbReference type="jPOST" id="Q9D819"/>
<dbReference type="PaxDb" id="10090-ENSMUSP00000020286"/>
<dbReference type="ProteomicsDB" id="267000"/>
<dbReference type="Pumba" id="Q9D819"/>
<dbReference type="Antibodypedia" id="14866">
    <property type="antibodies" value="267 antibodies from 32 providers"/>
</dbReference>
<dbReference type="DNASU" id="67895"/>
<dbReference type="Ensembl" id="ENSMUST00000020286.7">
    <property type="protein sequence ID" value="ENSMUSP00000020286.7"/>
    <property type="gene ID" value="ENSMUSG00000020089.9"/>
</dbReference>
<dbReference type="GeneID" id="67895"/>
<dbReference type="KEGG" id="mmu:67895"/>
<dbReference type="UCSC" id="uc007fge.1">
    <property type="organism name" value="mouse"/>
</dbReference>
<dbReference type="AGR" id="MGI:97831"/>
<dbReference type="CTD" id="5464"/>
<dbReference type="MGI" id="MGI:97831">
    <property type="gene designation" value="Ppa1"/>
</dbReference>
<dbReference type="VEuPathDB" id="HostDB:ENSMUSG00000020089"/>
<dbReference type="eggNOG" id="KOG1626">
    <property type="taxonomic scope" value="Eukaryota"/>
</dbReference>
<dbReference type="GeneTree" id="ENSGT00390000017004"/>
<dbReference type="HOGENOM" id="CLU_040684_0_2_1"/>
<dbReference type="InParanoid" id="Q9D819"/>
<dbReference type="OMA" id="GVWAMID"/>
<dbReference type="OrthoDB" id="1608002at2759"/>
<dbReference type="PhylomeDB" id="Q9D819"/>
<dbReference type="TreeFam" id="TF300887"/>
<dbReference type="BRENDA" id="3.6.1.1">
    <property type="organism ID" value="3474"/>
</dbReference>
<dbReference type="Reactome" id="R-MMU-379716">
    <property type="pathway name" value="Cytosolic tRNA aminoacylation"/>
</dbReference>
<dbReference type="Reactome" id="R-MMU-71737">
    <property type="pathway name" value="Pyrophosphate hydrolysis"/>
</dbReference>
<dbReference type="BioGRID-ORCS" id="67895">
    <property type="hits" value="29 hits in 78 CRISPR screens"/>
</dbReference>
<dbReference type="ChiTaRS" id="Ppa1">
    <property type="organism name" value="mouse"/>
</dbReference>
<dbReference type="PRO" id="PR:Q9D819"/>
<dbReference type="Proteomes" id="UP000000589">
    <property type="component" value="Chromosome 10"/>
</dbReference>
<dbReference type="RNAct" id="Q9D819">
    <property type="molecule type" value="protein"/>
</dbReference>
<dbReference type="Bgee" id="ENSMUSG00000020089">
    <property type="expression patterns" value="Expressed in seminal vesicle and 280 other cell types or tissues"/>
</dbReference>
<dbReference type="ExpressionAtlas" id="Q9D819">
    <property type="expression patterns" value="baseline and differential"/>
</dbReference>
<dbReference type="GO" id="GO:0005737">
    <property type="term" value="C:cytoplasm"/>
    <property type="evidence" value="ECO:0007669"/>
    <property type="project" value="UniProtKB-SubCell"/>
</dbReference>
<dbReference type="GO" id="GO:0004427">
    <property type="term" value="F:inorganic diphosphate phosphatase activity"/>
    <property type="evidence" value="ECO:0007669"/>
    <property type="project" value="UniProtKB-EC"/>
</dbReference>
<dbReference type="GO" id="GO:0000287">
    <property type="term" value="F:magnesium ion binding"/>
    <property type="evidence" value="ECO:0007669"/>
    <property type="project" value="InterPro"/>
</dbReference>
<dbReference type="GO" id="GO:0016462">
    <property type="term" value="F:pyrophosphatase activity"/>
    <property type="evidence" value="ECO:0000314"/>
    <property type="project" value="MGI"/>
</dbReference>
<dbReference type="GO" id="GO:0006796">
    <property type="term" value="P:phosphate-containing compound metabolic process"/>
    <property type="evidence" value="ECO:0000305"/>
    <property type="project" value="MGI"/>
</dbReference>
<dbReference type="CDD" id="cd00412">
    <property type="entry name" value="pyrophosphatase"/>
    <property type="match status" value="1"/>
</dbReference>
<dbReference type="FunFam" id="3.90.80.10:FF:000005">
    <property type="entry name" value="Pyrophosphatase (inorganic) 2"/>
    <property type="match status" value="1"/>
</dbReference>
<dbReference type="Gene3D" id="3.90.80.10">
    <property type="entry name" value="Inorganic pyrophosphatase"/>
    <property type="match status" value="1"/>
</dbReference>
<dbReference type="InterPro" id="IPR008162">
    <property type="entry name" value="Pyrophosphatase"/>
</dbReference>
<dbReference type="InterPro" id="IPR036649">
    <property type="entry name" value="Pyrophosphatase_sf"/>
</dbReference>
<dbReference type="PANTHER" id="PTHR10286">
    <property type="entry name" value="INORGANIC PYROPHOSPHATASE"/>
    <property type="match status" value="1"/>
</dbReference>
<dbReference type="Pfam" id="PF00719">
    <property type="entry name" value="Pyrophosphatase"/>
    <property type="match status" value="1"/>
</dbReference>
<dbReference type="SUPFAM" id="SSF50324">
    <property type="entry name" value="Inorganic pyrophosphatase"/>
    <property type="match status" value="1"/>
</dbReference>
<dbReference type="PROSITE" id="PS00387">
    <property type="entry name" value="PPASE"/>
    <property type="match status" value="1"/>
</dbReference>
<feature type="initiator methionine" description="Removed" evidence="2">
    <location>
        <position position="1"/>
    </location>
</feature>
<feature type="chain" id="PRO_0000137569" description="Inorganic pyrophosphatase">
    <location>
        <begin position="2"/>
        <end position="289"/>
    </location>
</feature>
<feature type="binding site" evidence="1">
    <location>
        <position position="116"/>
    </location>
    <ligand>
        <name>Mg(2+)</name>
        <dbReference type="ChEBI" id="CHEBI:18420"/>
        <label>1</label>
    </ligand>
</feature>
<feature type="binding site" evidence="1">
    <location>
        <position position="121"/>
    </location>
    <ligand>
        <name>Mg(2+)</name>
        <dbReference type="ChEBI" id="CHEBI:18420"/>
        <label>1</label>
    </ligand>
</feature>
<feature type="binding site" evidence="1">
    <location>
        <position position="121"/>
    </location>
    <ligand>
        <name>Mg(2+)</name>
        <dbReference type="ChEBI" id="CHEBI:18420"/>
        <label>2</label>
    </ligand>
</feature>
<feature type="binding site" evidence="1">
    <location>
        <position position="153"/>
    </location>
    <ligand>
        <name>Mg(2+)</name>
        <dbReference type="ChEBI" id="CHEBI:18420"/>
        <label>1</label>
    </ligand>
</feature>
<feature type="modified residue" description="N-acetylserine" evidence="2">
    <location>
        <position position="2"/>
    </location>
</feature>
<feature type="modified residue" description="N6-acetyllysine" evidence="2">
    <location>
        <position position="57"/>
    </location>
</feature>
<feature type="modified residue" description="N6-acetyllysine" evidence="2">
    <location>
        <position position="228"/>
    </location>
</feature>
<feature type="modified residue" description="Phosphoserine" evidence="2">
    <location>
        <position position="250"/>
    </location>
</feature>
<sequence length="289" mass="32667">MSGFSSEERAAPFTLEYRVFLKNEKGQYISPFHDVPIYADKDVFHMVVEVPRWSNAKMEIATKDPLNPIKQDVKKGKLRYVANLFPYKGYIWNYGAIPQTWEDPGHSDKHTGCCGDNDPIDVCEIGSKVCARGEIIRVKVLGILAMIDEGETDWKVIAINVDDPDAANYKDISDVERLKPGYLEATVDWFRRYKVPDGKPENEFAFNAEFKNKDFAVDIIKSTHDYWKALVTKKTDGKGISCMNTTVSESPFKCDPDAAKAIVDALPPPCESACSLPTDVDKWFHQQKN</sequence>
<gene>
    <name type="primary">Ppa1</name>
    <name type="synonym">Pp</name>
    <name type="synonym">Pyp</name>
</gene>